<organism>
    <name type="scientific">Legionella pneumophila (strain Corby)</name>
    <dbReference type="NCBI Taxonomy" id="400673"/>
    <lineage>
        <taxon>Bacteria</taxon>
        <taxon>Pseudomonadati</taxon>
        <taxon>Pseudomonadota</taxon>
        <taxon>Gammaproteobacteria</taxon>
        <taxon>Legionellales</taxon>
        <taxon>Legionellaceae</taxon>
        <taxon>Legionella</taxon>
    </lineage>
</organism>
<reference key="1">
    <citation type="submission" date="2006-11" db="EMBL/GenBank/DDBJ databases">
        <title>Identification and characterization of a new conjugation/ type IVA secretion system (trb/tra) of L. pneumophila Corby localized on a mobile genomic island.</title>
        <authorList>
            <person name="Gloeckner G."/>
            <person name="Albert-Weissenberger C."/>
            <person name="Weinmann E."/>
            <person name="Jacobi S."/>
            <person name="Schunder E."/>
            <person name="Steinert M."/>
            <person name="Buchrieser C."/>
            <person name="Hacker J."/>
            <person name="Heuner K."/>
        </authorList>
    </citation>
    <scope>NUCLEOTIDE SEQUENCE [LARGE SCALE GENOMIC DNA]</scope>
    <source>
        <strain>Corby</strain>
    </source>
</reference>
<name>PYRH_LEGPC</name>
<accession>A5ICK8</accession>
<gene>
    <name evidence="1" type="primary">pyrH</name>
    <name type="ordered locus">LPC_1141</name>
</gene>
<evidence type="ECO:0000255" key="1">
    <source>
        <dbReference type="HAMAP-Rule" id="MF_01220"/>
    </source>
</evidence>
<protein>
    <recommendedName>
        <fullName evidence="1">Uridylate kinase</fullName>
        <shortName evidence="1">UK</shortName>
        <ecNumber evidence="1">2.7.4.22</ecNumber>
    </recommendedName>
    <alternativeName>
        <fullName evidence="1">Uridine monophosphate kinase</fullName>
        <shortName evidence="1">UMP kinase</shortName>
        <shortName evidence="1">UMPK</shortName>
    </alternativeName>
</protein>
<keyword id="KW-0067">ATP-binding</keyword>
<keyword id="KW-0963">Cytoplasm</keyword>
<keyword id="KW-0418">Kinase</keyword>
<keyword id="KW-0547">Nucleotide-binding</keyword>
<keyword id="KW-0665">Pyrimidine biosynthesis</keyword>
<keyword id="KW-0808">Transferase</keyword>
<sequence length="246" mass="26529">MNESQPKLKYKRILLKFSGEALMGKSQFGIDPSVLDSLARDIAELIHMGVEVGLVLGGGNLFRGKALSQAGVGRVTGDHMGMLATVMNALALRDALERIDLPARIMSAIPMLGVVDPYHRRKAITHLRNGQVVIFAAGTGNPFFTTDTAACLRAIEIGADIVLKATKVDGVYSADPLKNSDAKRYDYLTYKEVLTKGLEVMDSTAICLCQDQGMPLQVFDMAAPKALKRIVTGERVGTIVGANHDQ</sequence>
<comment type="function">
    <text evidence="1">Catalyzes the reversible phosphorylation of UMP to UDP.</text>
</comment>
<comment type="catalytic activity">
    <reaction evidence="1">
        <text>UMP + ATP = UDP + ADP</text>
        <dbReference type="Rhea" id="RHEA:24400"/>
        <dbReference type="ChEBI" id="CHEBI:30616"/>
        <dbReference type="ChEBI" id="CHEBI:57865"/>
        <dbReference type="ChEBI" id="CHEBI:58223"/>
        <dbReference type="ChEBI" id="CHEBI:456216"/>
        <dbReference type="EC" id="2.7.4.22"/>
    </reaction>
</comment>
<comment type="activity regulation">
    <text evidence="1">Inhibited by UTP.</text>
</comment>
<comment type="pathway">
    <text evidence="1">Pyrimidine metabolism; CTP biosynthesis via de novo pathway; UDP from UMP (UMPK route): step 1/1.</text>
</comment>
<comment type="subunit">
    <text evidence="1">Homohexamer.</text>
</comment>
<comment type="subcellular location">
    <subcellularLocation>
        <location evidence="1">Cytoplasm</location>
    </subcellularLocation>
</comment>
<comment type="similarity">
    <text evidence="1">Belongs to the UMP kinase family.</text>
</comment>
<proteinExistence type="inferred from homology"/>
<dbReference type="EC" id="2.7.4.22" evidence="1"/>
<dbReference type="EMBL" id="CP000675">
    <property type="protein sequence ID" value="ABQ55108.1"/>
    <property type="molecule type" value="Genomic_DNA"/>
</dbReference>
<dbReference type="SMR" id="A5ICK8"/>
<dbReference type="KEGG" id="lpc:LPC_1141"/>
<dbReference type="HOGENOM" id="CLU_033861_0_0_6"/>
<dbReference type="UniPathway" id="UPA00159">
    <property type="reaction ID" value="UER00275"/>
</dbReference>
<dbReference type="GO" id="GO:0005829">
    <property type="term" value="C:cytosol"/>
    <property type="evidence" value="ECO:0007669"/>
    <property type="project" value="TreeGrafter"/>
</dbReference>
<dbReference type="GO" id="GO:0005524">
    <property type="term" value="F:ATP binding"/>
    <property type="evidence" value="ECO:0007669"/>
    <property type="project" value="UniProtKB-KW"/>
</dbReference>
<dbReference type="GO" id="GO:0033862">
    <property type="term" value="F:UMP kinase activity"/>
    <property type="evidence" value="ECO:0007669"/>
    <property type="project" value="UniProtKB-EC"/>
</dbReference>
<dbReference type="GO" id="GO:0044210">
    <property type="term" value="P:'de novo' CTP biosynthetic process"/>
    <property type="evidence" value="ECO:0007669"/>
    <property type="project" value="UniProtKB-UniRule"/>
</dbReference>
<dbReference type="GO" id="GO:0006225">
    <property type="term" value="P:UDP biosynthetic process"/>
    <property type="evidence" value="ECO:0007669"/>
    <property type="project" value="TreeGrafter"/>
</dbReference>
<dbReference type="CDD" id="cd04254">
    <property type="entry name" value="AAK_UMPK-PyrH-Ec"/>
    <property type="match status" value="1"/>
</dbReference>
<dbReference type="FunFam" id="3.40.1160.10:FF:000001">
    <property type="entry name" value="Uridylate kinase"/>
    <property type="match status" value="1"/>
</dbReference>
<dbReference type="Gene3D" id="3.40.1160.10">
    <property type="entry name" value="Acetylglutamate kinase-like"/>
    <property type="match status" value="1"/>
</dbReference>
<dbReference type="HAMAP" id="MF_01220_B">
    <property type="entry name" value="PyrH_B"/>
    <property type="match status" value="1"/>
</dbReference>
<dbReference type="InterPro" id="IPR036393">
    <property type="entry name" value="AceGlu_kinase-like_sf"/>
</dbReference>
<dbReference type="InterPro" id="IPR001048">
    <property type="entry name" value="Asp/Glu/Uridylate_kinase"/>
</dbReference>
<dbReference type="InterPro" id="IPR011817">
    <property type="entry name" value="Uridylate_kinase"/>
</dbReference>
<dbReference type="InterPro" id="IPR015963">
    <property type="entry name" value="Uridylate_kinase_bac"/>
</dbReference>
<dbReference type="NCBIfam" id="TIGR02075">
    <property type="entry name" value="pyrH_bact"/>
    <property type="match status" value="1"/>
</dbReference>
<dbReference type="PANTHER" id="PTHR42833">
    <property type="entry name" value="URIDYLATE KINASE"/>
    <property type="match status" value="1"/>
</dbReference>
<dbReference type="PANTHER" id="PTHR42833:SF4">
    <property type="entry name" value="URIDYLATE KINASE PUMPKIN, CHLOROPLASTIC"/>
    <property type="match status" value="1"/>
</dbReference>
<dbReference type="Pfam" id="PF00696">
    <property type="entry name" value="AA_kinase"/>
    <property type="match status" value="1"/>
</dbReference>
<dbReference type="PIRSF" id="PIRSF005650">
    <property type="entry name" value="Uridylate_kin"/>
    <property type="match status" value="1"/>
</dbReference>
<dbReference type="SUPFAM" id="SSF53633">
    <property type="entry name" value="Carbamate kinase-like"/>
    <property type="match status" value="1"/>
</dbReference>
<feature type="chain" id="PRO_1000053946" description="Uridylate kinase">
    <location>
        <begin position="1"/>
        <end position="246"/>
    </location>
</feature>
<feature type="binding site" evidence="1">
    <location>
        <begin position="16"/>
        <end position="19"/>
    </location>
    <ligand>
        <name>ATP</name>
        <dbReference type="ChEBI" id="CHEBI:30616"/>
    </ligand>
</feature>
<feature type="binding site" evidence="1">
    <location>
        <position position="58"/>
    </location>
    <ligand>
        <name>UMP</name>
        <dbReference type="ChEBI" id="CHEBI:57865"/>
    </ligand>
</feature>
<feature type="binding site" evidence="1">
    <location>
        <position position="59"/>
    </location>
    <ligand>
        <name>ATP</name>
        <dbReference type="ChEBI" id="CHEBI:30616"/>
    </ligand>
</feature>
<feature type="binding site" evidence="1">
    <location>
        <position position="63"/>
    </location>
    <ligand>
        <name>ATP</name>
        <dbReference type="ChEBI" id="CHEBI:30616"/>
    </ligand>
</feature>
<feature type="binding site" evidence="1">
    <location>
        <position position="78"/>
    </location>
    <ligand>
        <name>UMP</name>
        <dbReference type="ChEBI" id="CHEBI:57865"/>
    </ligand>
</feature>
<feature type="binding site" evidence="1">
    <location>
        <begin position="139"/>
        <end position="146"/>
    </location>
    <ligand>
        <name>UMP</name>
        <dbReference type="ChEBI" id="CHEBI:57865"/>
    </ligand>
</feature>
<feature type="binding site" evidence="1">
    <location>
        <position position="166"/>
    </location>
    <ligand>
        <name>ATP</name>
        <dbReference type="ChEBI" id="CHEBI:30616"/>
    </ligand>
</feature>
<feature type="binding site" evidence="1">
    <location>
        <position position="172"/>
    </location>
    <ligand>
        <name>ATP</name>
        <dbReference type="ChEBI" id="CHEBI:30616"/>
    </ligand>
</feature>
<feature type="binding site" evidence="1">
    <location>
        <position position="175"/>
    </location>
    <ligand>
        <name>ATP</name>
        <dbReference type="ChEBI" id="CHEBI:30616"/>
    </ligand>
</feature>